<accession>Q8FV85</accession>
<accession>G0KDX0</accession>
<evidence type="ECO:0000255" key="1">
    <source>
        <dbReference type="HAMAP-Rule" id="MF_01719"/>
    </source>
</evidence>
<evidence type="ECO:0000305" key="2"/>
<name>METN_BRUSU</name>
<feature type="chain" id="PRO_0000270260" description="Methionine import ATP-binding protein MetN">
    <location>
        <begin position="1"/>
        <end position="369"/>
    </location>
</feature>
<feature type="domain" description="ABC transporter" evidence="1">
    <location>
        <begin position="31"/>
        <end position="266"/>
    </location>
</feature>
<feature type="binding site" evidence="1">
    <location>
        <begin position="63"/>
        <end position="70"/>
    </location>
    <ligand>
        <name>ATP</name>
        <dbReference type="ChEBI" id="CHEBI:30616"/>
    </ligand>
</feature>
<gene>
    <name evidence="1" type="primary">metN</name>
    <name type="ordered locus">BRA0961</name>
    <name type="ordered locus">BS1330_II0953</name>
</gene>
<protein>
    <recommendedName>
        <fullName evidence="1">Methionine import ATP-binding protein MetN</fullName>
        <ecNumber evidence="1">7.4.2.11</ecNumber>
    </recommendedName>
</protein>
<keyword id="KW-0029">Amino-acid transport</keyword>
<keyword id="KW-0067">ATP-binding</keyword>
<keyword id="KW-0997">Cell inner membrane</keyword>
<keyword id="KW-1003">Cell membrane</keyword>
<keyword id="KW-0472">Membrane</keyword>
<keyword id="KW-0547">Nucleotide-binding</keyword>
<keyword id="KW-1278">Translocase</keyword>
<keyword id="KW-0813">Transport</keyword>
<dbReference type="EC" id="7.4.2.11" evidence="1"/>
<dbReference type="EMBL" id="AE014292">
    <property type="protein sequence ID" value="AAN34132.1"/>
    <property type="status" value="ALT_INIT"/>
    <property type="molecule type" value="Genomic_DNA"/>
</dbReference>
<dbReference type="EMBL" id="CP002998">
    <property type="protein sequence ID" value="AEM20408.1"/>
    <property type="status" value="ALT_INIT"/>
    <property type="molecule type" value="Genomic_DNA"/>
</dbReference>
<dbReference type="SMR" id="Q8FV85"/>
<dbReference type="KEGG" id="bms:BRA0961"/>
<dbReference type="KEGG" id="bsi:BS1330_II0953"/>
<dbReference type="HOGENOM" id="CLU_000604_1_3_5"/>
<dbReference type="Proteomes" id="UP000007104">
    <property type="component" value="Chromosome II"/>
</dbReference>
<dbReference type="GO" id="GO:0005886">
    <property type="term" value="C:plasma membrane"/>
    <property type="evidence" value="ECO:0007669"/>
    <property type="project" value="UniProtKB-SubCell"/>
</dbReference>
<dbReference type="GO" id="GO:0033232">
    <property type="term" value="F:ABC-type D-methionine transporter activity"/>
    <property type="evidence" value="ECO:0007669"/>
    <property type="project" value="UniProtKB-EC"/>
</dbReference>
<dbReference type="GO" id="GO:0005524">
    <property type="term" value="F:ATP binding"/>
    <property type="evidence" value="ECO:0007669"/>
    <property type="project" value="UniProtKB-KW"/>
</dbReference>
<dbReference type="GO" id="GO:0016887">
    <property type="term" value="F:ATP hydrolysis activity"/>
    <property type="evidence" value="ECO:0007669"/>
    <property type="project" value="InterPro"/>
</dbReference>
<dbReference type="CDD" id="cd03258">
    <property type="entry name" value="ABC_MetN_methionine_transporter"/>
    <property type="match status" value="1"/>
</dbReference>
<dbReference type="FunFam" id="3.40.50.300:FF:000056">
    <property type="entry name" value="Cell division ATP-binding protein FtsE"/>
    <property type="match status" value="1"/>
</dbReference>
<dbReference type="Gene3D" id="3.30.70.260">
    <property type="match status" value="1"/>
</dbReference>
<dbReference type="Gene3D" id="3.40.50.300">
    <property type="entry name" value="P-loop containing nucleotide triphosphate hydrolases"/>
    <property type="match status" value="1"/>
</dbReference>
<dbReference type="InterPro" id="IPR003593">
    <property type="entry name" value="AAA+_ATPase"/>
</dbReference>
<dbReference type="InterPro" id="IPR003439">
    <property type="entry name" value="ABC_transporter-like_ATP-bd"/>
</dbReference>
<dbReference type="InterPro" id="IPR017871">
    <property type="entry name" value="ABC_transporter-like_CS"/>
</dbReference>
<dbReference type="InterPro" id="IPR045865">
    <property type="entry name" value="ACT-like_dom_sf"/>
</dbReference>
<dbReference type="InterPro" id="IPR041701">
    <property type="entry name" value="MetN_ABC"/>
</dbReference>
<dbReference type="InterPro" id="IPR050086">
    <property type="entry name" value="MetN_ABC_transporter-like"/>
</dbReference>
<dbReference type="InterPro" id="IPR018449">
    <property type="entry name" value="NIL_domain"/>
</dbReference>
<dbReference type="InterPro" id="IPR027417">
    <property type="entry name" value="P-loop_NTPase"/>
</dbReference>
<dbReference type="PANTHER" id="PTHR43166">
    <property type="entry name" value="AMINO ACID IMPORT ATP-BINDING PROTEIN"/>
    <property type="match status" value="1"/>
</dbReference>
<dbReference type="PANTHER" id="PTHR43166:SF30">
    <property type="entry name" value="METHIONINE IMPORT ATP-BINDING PROTEIN METN"/>
    <property type="match status" value="1"/>
</dbReference>
<dbReference type="Pfam" id="PF00005">
    <property type="entry name" value="ABC_tran"/>
    <property type="match status" value="1"/>
</dbReference>
<dbReference type="Pfam" id="PF09383">
    <property type="entry name" value="NIL"/>
    <property type="match status" value="1"/>
</dbReference>
<dbReference type="SMART" id="SM00382">
    <property type="entry name" value="AAA"/>
    <property type="match status" value="1"/>
</dbReference>
<dbReference type="SMART" id="SM00930">
    <property type="entry name" value="NIL"/>
    <property type="match status" value="1"/>
</dbReference>
<dbReference type="SUPFAM" id="SSF55021">
    <property type="entry name" value="ACT-like"/>
    <property type="match status" value="1"/>
</dbReference>
<dbReference type="SUPFAM" id="SSF52540">
    <property type="entry name" value="P-loop containing nucleoside triphosphate hydrolases"/>
    <property type="match status" value="1"/>
</dbReference>
<dbReference type="PROSITE" id="PS00211">
    <property type="entry name" value="ABC_TRANSPORTER_1"/>
    <property type="match status" value="1"/>
</dbReference>
<dbReference type="PROSITE" id="PS50893">
    <property type="entry name" value="ABC_TRANSPORTER_2"/>
    <property type="match status" value="1"/>
</dbReference>
<dbReference type="PROSITE" id="PS51264">
    <property type="entry name" value="METN"/>
    <property type="match status" value="1"/>
</dbReference>
<proteinExistence type="inferred from homology"/>
<organism>
    <name type="scientific">Brucella suis biovar 1 (strain 1330)</name>
    <dbReference type="NCBI Taxonomy" id="204722"/>
    <lineage>
        <taxon>Bacteria</taxon>
        <taxon>Pseudomonadati</taxon>
        <taxon>Pseudomonadota</taxon>
        <taxon>Alphaproteobacteria</taxon>
        <taxon>Hyphomicrobiales</taxon>
        <taxon>Brucellaceae</taxon>
        <taxon>Brucella/Ochrobactrum group</taxon>
        <taxon>Brucella</taxon>
    </lineage>
</organism>
<reference key="1">
    <citation type="journal article" date="2002" name="Proc. Natl. Acad. Sci. U.S.A.">
        <title>The Brucella suis genome reveals fundamental similarities between animal and plant pathogens and symbionts.</title>
        <authorList>
            <person name="Paulsen I.T."/>
            <person name="Seshadri R."/>
            <person name="Nelson K.E."/>
            <person name="Eisen J.A."/>
            <person name="Heidelberg J.F."/>
            <person name="Read T.D."/>
            <person name="Dodson R.J."/>
            <person name="Umayam L.A."/>
            <person name="Brinkac L.M."/>
            <person name="Beanan M.J."/>
            <person name="Daugherty S.C."/>
            <person name="DeBoy R.T."/>
            <person name="Durkin A.S."/>
            <person name="Kolonay J.F."/>
            <person name="Madupu R."/>
            <person name="Nelson W.C."/>
            <person name="Ayodeji B."/>
            <person name="Kraul M."/>
            <person name="Shetty J."/>
            <person name="Malek J.A."/>
            <person name="Van Aken S.E."/>
            <person name="Riedmuller S."/>
            <person name="Tettelin H."/>
            <person name="Gill S.R."/>
            <person name="White O."/>
            <person name="Salzberg S.L."/>
            <person name="Hoover D.L."/>
            <person name="Lindler L.E."/>
            <person name="Halling S.M."/>
            <person name="Boyle S.M."/>
            <person name="Fraser C.M."/>
        </authorList>
    </citation>
    <scope>NUCLEOTIDE SEQUENCE [LARGE SCALE GENOMIC DNA]</scope>
    <source>
        <strain>1330</strain>
    </source>
</reference>
<reference key="2">
    <citation type="journal article" date="2011" name="J. Bacteriol.">
        <title>Revised genome sequence of Brucella suis 1330.</title>
        <authorList>
            <person name="Tae H."/>
            <person name="Shallom S."/>
            <person name="Settlage R."/>
            <person name="Preston D."/>
            <person name="Adams L.G."/>
            <person name="Garner H.R."/>
        </authorList>
    </citation>
    <scope>NUCLEOTIDE SEQUENCE [LARGE SCALE GENOMIC DNA]</scope>
    <source>
        <strain>1330</strain>
    </source>
</reference>
<sequence length="369" mass="39445">MQHAAVCSGTSRHRRTTVTIEKPPATSAPIVEMKDVRRMFGETAAINGVSLSVARGEILGIIGRSGAGKSTLIRCVNGLEKPDTGSIHIEGREITSLDEDALRPVRRRIGMVFQHFNLLSAKTAAQNIALPLKIAGMPKAERIKRVAELLELVGLSDKASHYPAQLSGGQKQRVGIARALAAEPAVLLSDEATSALDPETTQSILALLKDINAKLGLTILLITHEMDVIRRIADRVIVLDHGLIAEEGPVWKVFANPQSPVTQSMLQVLTPELPAIWRNRLEKKGDQAILRVKLSGMAAKGAFFNDVAAATSLAPQLIHGGMDTIQGEPVGTLFIGLPAEDKTKLKAAIGYLNTHADATEVLGYVSGNA</sequence>
<comment type="function">
    <text evidence="1">Part of the ABC transporter complex MetNIQ involved in methionine import. Responsible for energy coupling to the transport system.</text>
</comment>
<comment type="catalytic activity">
    <reaction evidence="1">
        <text>L-methionine(out) + ATP + H2O = L-methionine(in) + ADP + phosphate + H(+)</text>
        <dbReference type="Rhea" id="RHEA:29779"/>
        <dbReference type="ChEBI" id="CHEBI:15377"/>
        <dbReference type="ChEBI" id="CHEBI:15378"/>
        <dbReference type="ChEBI" id="CHEBI:30616"/>
        <dbReference type="ChEBI" id="CHEBI:43474"/>
        <dbReference type="ChEBI" id="CHEBI:57844"/>
        <dbReference type="ChEBI" id="CHEBI:456216"/>
        <dbReference type="EC" id="7.4.2.11"/>
    </reaction>
</comment>
<comment type="catalytic activity">
    <reaction evidence="1">
        <text>D-methionine(out) + ATP + H2O = D-methionine(in) + ADP + phosphate + H(+)</text>
        <dbReference type="Rhea" id="RHEA:29767"/>
        <dbReference type="ChEBI" id="CHEBI:15377"/>
        <dbReference type="ChEBI" id="CHEBI:15378"/>
        <dbReference type="ChEBI" id="CHEBI:30616"/>
        <dbReference type="ChEBI" id="CHEBI:43474"/>
        <dbReference type="ChEBI" id="CHEBI:57932"/>
        <dbReference type="ChEBI" id="CHEBI:456216"/>
        <dbReference type="EC" id="7.4.2.11"/>
    </reaction>
</comment>
<comment type="subunit">
    <text evidence="1">The complex is composed of two ATP-binding proteins (MetN), two transmembrane proteins (MetI) and a solute-binding protein (MetQ).</text>
</comment>
<comment type="subcellular location">
    <subcellularLocation>
        <location evidence="1">Cell inner membrane</location>
        <topology evidence="1">Peripheral membrane protein</topology>
    </subcellularLocation>
</comment>
<comment type="similarity">
    <text evidence="1">Belongs to the ABC transporter superfamily. Methionine importer (TC 3.A.1.24) family.</text>
</comment>
<comment type="sequence caution" evidence="2">
    <conflict type="erroneous initiation">
        <sequence resource="EMBL-CDS" id="AAN34132"/>
    </conflict>
</comment>
<comment type="sequence caution" evidence="2">
    <conflict type="erroneous initiation">
        <sequence resource="EMBL-CDS" id="AEM20408"/>
    </conflict>
    <text>Truncated N-terminus.</text>
</comment>